<name>IMD_ARTGO</name>
<gene>
    <name type="primary">imd</name>
</gene>
<accession>Q44052</accession>
<organism>
    <name type="scientific">Arthrobacter globiformis</name>
    <dbReference type="NCBI Taxonomy" id="1665"/>
    <lineage>
        <taxon>Bacteria</taxon>
        <taxon>Bacillati</taxon>
        <taxon>Actinomycetota</taxon>
        <taxon>Actinomycetes</taxon>
        <taxon>Micrococcales</taxon>
        <taxon>Micrococcaceae</taxon>
        <taxon>Arthrobacter</taxon>
    </lineage>
</organism>
<proteinExistence type="evidence at protein level"/>
<evidence type="ECO:0000250" key="1"/>
<evidence type="ECO:0000255" key="2">
    <source>
        <dbReference type="PROSITE-ProRule" id="PRU00523"/>
    </source>
</evidence>
<evidence type="ECO:0000256" key="3">
    <source>
        <dbReference type="SAM" id="MobiDB-lite"/>
    </source>
</evidence>
<evidence type="ECO:0000305" key="4"/>
<comment type="catalytic activity">
    <reaction>
        <text>Hydrolysis of (1-&gt;6)-alpha-D-glucosidic linkages in polysaccharides, to remove successive isomaltose units from the non-reducing ends of the chains.</text>
        <dbReference type="EC" id="3.2.1.94"/>
    </reaction>
</comment>
<comment type="subcellular location">
    <subcellularLocation>
        <location>Secreted</location>
    </subcellularLocation>
</comment>
<comment type="PTM">
    <text>Predicted to be exported by the Tat system. The position of the signal peptide cleavage has been experimentally proven.</text>
</comment>
<comment type="similarity">
    <text evidence="4">Belongs to the glycosyl hydrolase 27 family.</text>
</comment>
<dbReference type="EC" id="3.2.1.94"/>
<dbReference type="EMBL" id="D30761">
    <property type="protein sequence ID" value="BAA06424.1"/>
    <property type="molecule type" value="Genomic_DNA"/>
</dbReference>
<dbReference type="PIR" id="A55549">
    <property type="entry name" value="A55549"/>
</dbReference>
<dbReference type="SMR" id="Q44052"/>
<dbReference type="CAZy" id="CBM35">
    <property type="family name" value="Carbohydrate-Binding Module Family 35"/>
</dbReference>
<dbReference type="CAZy" id="GH27">
    <property type="family name" value="Glycoside Hydrolase Family 27"/>
</dbReference>
<dbReference type="GO" id="GO:0005576">
    <property type="term" value="C:extracellular region"/>
    <property type="evidence" value="ECO:0007669"/>
    <property type="project" value="UniProtKB-SubCell"/>
</dbReference>
<dbReference type="GO" id="GO:0030246">
    <property type="term" value="F:carbohydrate binding"/>
    <property type="evidence" value="ECO:0007669"/>
    <property type="project" value="InterPro"/>
</dbReference>
<dbReference type="GO" id="GO:0033923">
    <property type="term" value="F:glucan 1,6-alpha-isomaltosidase activity"/>
    <property type="evidence" value="ECO:0007669"/>
    <property type="project" value="UniProtKB-EC"/>
</dbReference>
<dbReference type="GO" id="GO:0005975">
    <property type="term" value="P:carbohydrate metabolic process"/>
    <property type="evidence" value="ECO:0007669"/>
    <property type="project" value="InterPro"/>
</dbReference>
<dbReference type="Gene3D" id="3.20.20.70">
    <property type="entry name" value="Aldolase class I"/>
    <property type="match status" value="1"/>
</dbReference>
<dbReference type="Gene3D" id="2.60.120.260">
    <property type="entry name" value="Galactose-binding domain-like"/>
    <property type="match status" value="1"/>
</dbReference>
<dbReference type="Gene3D" id="2.60.40.1180">
    <property type="entry name" value="Golgi alpha-mannosidase II"/>
    <property type="match status" value="1"/>
</dbReference>
<dbReference type="InterPro" id="IPR013785">
    <property type="entry name" value="Aldolase_TIM"/>
</dbReference>
<dbReference type="InterPro" id="IPR005084">
    <property type="entry name" value="CBM6"/>
</dbReference>
<dbReference type="InterPro" id="IPR008979">
    <property type="entry name" value="Galactose-bd-like_sf"/>
</dbReference>
<dbReference type="InterPro" id="IPR002241">
    <property type="entry name" value="Glyco_hydro_27"/>
</dbReference>
<dbReference type="InterPro" id="IPR000111">
    <property type="entry name" value="Glyco_hydro_27/36_CS"/>
</dbReference>
<dbReference type="InterPro" id="IPR013780">
    <property type="entry name" value="Glyco_hydro_b"/>
</dbReference>
<dbReference type="InterPro" id="IPR017853">
    <property type="entry name" value="Glycoside_hydrolase_SF"/>
</dbReference>
<dbReference type="InterPro" id="IPR041233">
    <property type="entry name" value="Melibiase_C"/>
</dbReference>
<dbReference type="InterPro" id="IPR006311">
    <property type="entry name" value="TAT_signal"/>
</dbReference>
<dbReference type="PANTHER" id="PTHR11452:SF75">
    <property type="entry name" value="ALPHA-GALACTOSIDASE MEL1"/>
    <property type="match status" value="1"/>
</dbReference>
<dbReference type="PANTHER" id="PTHR11452">
    <property type="entry name" value="ALPHA-GALACTOSIDASE/ALPHA-N-ACETYLGALACTOSAMINIDASE"/>
    <property type="match status" value="1"/>
</dbReference>
<dbReference type="Pfam" id="PF17801">
    <property type="entry name" value="Melibiase_C"/>
    <property type="match status" value="1"/>
</dbReference>
<dbReference type="SUPFAM" id="SSF51445">
    <property type="entry name" value="(Trans)glycosidases"/>
    <property type="match status" value="1"/>
</dbReference>
<dbReference type="SUPFAM" id="SSF49785">
    <property type="entry name" value="Galactose-binding domain-like"/>
    <property type="match status" value="1"/>
</dbReference>
<dbReference type="SUPFAM" id="SSF51011">
    <property type="entry name" value="Glycosyl hydrolase domain"/>
    <property type="match status" value="1"/>
</dbReference>
<dbReference type="PROSITE" id="PS00512">
    <property type="entry name" value="ALPHA_GALACTOSIDASE"/>
    <property type="match status" value="1"/>
</dbReference>
<dbReference type="PROSITE" id="PS51175">
    <property type="entry name" value="CBM6"/>
    <property type="match status" value="1"/>
</dbReference>
<dbReference type="PROSITE" id="PS51318">
    <property type="entry name" value="TAT"/>
    <property type="match status" value="1"/>
</dbReference>
<protein>
    <recommendedName>
        <fullName>Isomalto-dextranase</fullName>
        <ecNumber>3.2.1.94</ecNumber>
    </recommendedName>
    <alternativeName>
        <fullName>Exo-isomaltohydrolase</fullName>
    </alternativeName>
    <alternativeName>
        <fullName>Glucan 1,6-alpha-isomaltosidase</fullName>
    </alternativeName>
</protein>
<feature type="signal peptide" description="Tat-type signal">
    <location>
        <begin position="1"/>
        <end position="39"/>
    </location>
</feature>
<feature type="chain" id="PRO_0000001022" description="Isomalto-dextranase">
    <location>
        <begin position="40"/>
        <end position="641"/>
    </location>
</feature>
<feature type="domain" description="CBM6" evidence="2">
    <location>
        <begin position="500"/>
        <end position="640"/>
    </location>
</feature>
<feature type="region of interest" description="Disordered" evidence="3">
    <location>
        <begin position="556"/>
        <end position="588"/>
    </location>
</feature>
<feature type="compositionally biased region" description="Low complexity" evidence="3">
    <location>
        <begin position="561"/>
        <end position="576"/>
    </location>
</feature>
<feature type="compositionally biased region" description="Basic and acidic residues" evidence="3">
    <location>
        <begin position="577"/>
        <end position="586"/>
    </location>
</feature>
<feature type="active site" description="Nucleophile" evidence="1">
    <location>
        <position position="227"/>
    </location>
</feature>
<feature type="active site" description="Proton donor" evidence="1">
    <location>
        <position position="288"/>
    </location>
</feature>
<keyword id="KW-0903">Direct protein sequencing</keyword>
<keyword id="KW-0326">Glycosidase</keyword>
<keyword id="KW-0378">Hydrolase</keyword>
<keyword id="KW-0964">Secreted</keyword>
<keyword id="KW-0732">Signal</keyword>
<reference key="1">
    <citation type="journal article" date="1994" name="J. Bacteriol.">
        <title>Molecular cloning and expression of an isomalto-dextranase gene from Arthrobacter globiformis T6.</title>
        <authorList>
            <person name="Iwai A."/>
            <person name="Ito H."/>
            <person name="Mizuno T."/>
            <person name="Mori H."/>
            <person name="Matsui H."/>
            <person name="Honma M."/>
            <person name="Okada G."/>
            <person name="Chiba S."/>
        </authorList>
    </citation>
    <scope>NUCLEOTIDE SEQUENCE [GENOMIC DNA]</scope>
    <scope>PARTIAL PROTEIN SEQUENCE</scope>
    <source>
        <strain>T6</strain>
    </source>
</reference>
<sequence>MMNLSRRTLLTTGSAATLAYALGMAGSAQAATAVTARPGVPVTAAPPLRLASRNSVFTRSGAGPRYWNIYGYSFPHNAPIPENEWKANIDWLAGNFADFGYDIACTDGWIEGSSRTTGNGYITSYNDSWQHDWAYWANYLAARKMKLGVYYNPLWVHRAAVEDASKTVLGRPDVKIADLVVPGDFFARDIGGNQLYWLDVTKSGAKEYVQGYVRYFKDLGVPYLRIDFLSWYEDGRDANIGQVNAPHGRANYELALSWINEAAGEDMEVSLVMPHMFQDGSAELANGDLVRINADADKGGWDRLSGMRQNWQDAWPNWANPFCGFTGWSHRNGRGQLILDGDFMRASTFASDEERKTMMNLMVAAGSPLAIADTYQQIGNNAWVYTNKEVLQLNADGLVGKPLYRSATPFSKDPGSRDTERWAGQLPDGSWGVALFNRSDTETVTKTIDFAKDLGLATGGNVRDLWEHRNLGMDSRATAALAPHASAIFRVTPPKMHGTTRYPAAFAAWGGGAGFNNNHPGYDGNGFVDGLQAGSGSADPLVTFAVQVPHRAATPSGYRYANATDDNTTSKTTTKKANPEKADRSTVDGPVHVSFPGLATWDTWGVAAGTITLDAGLNLVTIGRGATDKGAINLNWIELDM</sequence>